<organism>
    <name type="scientific">Prochlorococcus marinus (strain MIT 9313)</name>
    <dbReference type="NCBI Taxonomy" id="74547"/>
    <lineage>
        <taxon>Bacteria</taxon>
        <taxon>Bacillati</taxon>
        <taxon>Cyanobacteriota</taxon>
        <taxon>Cyanophyceae</taxon>
        <taxon>Synechococcales</taxon>
        <taxon>Prochlorococcaceae</taxon>
        <taxon>Prochlorococcus</taxon>
    </lineage>
</organism>
<keyword id="KW-1003">Cell membrane</keyword>
<keyword id="KW-0472">Membrane</keyword>
<keyword id="KW-1185">Reference proteome</keyword>
<keyword id="KW-0812">Transmembrane</keyword>
<keyword id="KW-1133">Transmembrane helix</keyword>
<name>Y755_PROMM</name>
<dbReference type="EMBL" id="BX548175">
    <property type="protein sequence ID" value="CAE20930.1"/>
    <property type="molecule type" value="Genomic_DNA"/>
</dbReference>
<dbReference type="KEGG" id="pmt:PMT_0755"/>
<dbReference type="eggNOG" id="COG1615">
    <property type="taxonomic scope" value="Bacteria"/>
</dbReference>
<dbReference type="HOGENOM" id="CLU_007733_0_0_3"/>
<dbReference type="Proteomes" id="UP000001423">
    <property type="component" value="Chromosome"/>
</dbReference>
<dbReference type="GO" id="GO:0005576">
    <property type="term" value="C:extracellular region"/>
    <property type="evidence" value="ECO:0007669"/>
    <property type="project" value="TreeGrafter"/>
</dbReference>
<dbReference type="GO" id="GO:0005886">
    <property type="term" value="C:plasma membrane"/>
    <property type="evidence" value="ECO:0007669"/>
    <property type="project" value="UniProtKB-SubCell"/>
</dbReference>
<dbReference type="HAMAP" id="MF_01600">
    <property type="entry name" value="UPF0182"/>
    <property type="match status" value="1"/>
</dbReference>
<dbReference type="InterPro" id="IPR005372">
    <property type="entry name" value="UPF0182"/>
</dbReference>
<dbReference type="PANTHER" id="PTHR39344">
    <property type="entry name" value="UPF0182 PROTEIN SLL1060"/>
    <property type="match status" value="1"/>
</dbReference>
<dbReference type="PANTHER" id="PTHR39344:SF1">
    <property type="entry name" value="UPF0182 PROTEIN SLL1060"/>
    <property type="match status" value="1"/>
</dbReference>
<dbReference type="Pfam" id="PF03699">
    <property type="entry name" value="UPF0182"/>
    <property type="match status" value="1"/>
</dbReference>
<accession>Q7V7J0</accession>
<feature type="chain" id="PRO_0000291289" description="UPF0182 protein PMT_0755">
    <location>
        <begin position="1"/>
        <end position="955"/>
    </location>
</feature>
<feature type="transmembrane region" description="Helical" evidence="1">
    <location>
        <begin position="25"/>
        <end position="45"/>
    </location>
</feature>
<feature type="transmembrane region" description="Helical" evidence="1">
    <location>
        <begin position="58"/>
        <end position="78"/>
    </location>
</feature>
<feature type="transmembrane region" description="Helical" evidence="1">
    <location>
        <begin position="107"/>
        <end position="127"/>
    </location>
</feature>
<feature type="transmembrane region" description="Helical" evidence="1">
    <location>
        <begin position="146"/>
        <end position="166"/>
    </location>
</feature>
<feature type="transmembrane region" description="Helical" evidence="1">
    <location>
        <begin position="178"/>
        <end position="198"/>
    </location>
</feature>
<feature type="transmembrane region" description="Helical" evidence="1">
    <location>
        <begin position="214"/>
        <end position="234"/>
    </location>
</feature>
<feature type="transmembrane region" description="Helical" evidence="1">
    <location>
        <begin position="264"/>
        <end position="284"/>
    </location>
</feature>
<feature type="transmembrane region" description="Helical" evidence="1">
    <location>
        <begin position="313"/>
        <end position="333"/>
    </location>
</feature>
<feature type="transmembrane region" description="Helical" evidence="1">
    <location>
        <begin position="340"/>
        <end position="360"/>
    </location>
</feature>
<proteinExistence type="inferred from homology"/>
<gene>
    <name type="ordered locus">PMT_0755</name>
</gene>
<sequence length="955" mass="107655">MLIESMGLACFARPLQWFKSQWLWLLLSIAAFCLLMRVQVEWLWFGQFDWQGMLLRRWLWQLGGLLLALLVVATCQLWQRNWIKLEVASNLGESSLSLHGWRYGLGLLGCFVVVVGDLVLLSRLAWLACFKPFDLGHWWSEPFEDIWALVIPLSCVFISICVMLGNARGGRIAHLIGCFCFSISIARGWGLWALALAIPPTGIKEPLLGGDVSFGLGQFPALAFALVVLLAQLILTTCTTIWMKLAQPESLSDWVFKGLSPRQCNFLRPLIGIILLTLSALLWLSRHELLWTQNGTVAGAGWLDAHLILPLRSLASLAILVFAFLVIPFTWIQQRRLLRLIASIIGVGAILLEVLLAPFVQWMVVKPRELKLETPYIIRAIKATRKAFQLDSITTTLINPQPQLTQLDLEQGASTLRNIRLWDSQPLLATNRQLQQLRVYYRFSNAAVDRYRFVPDVANRQQVMITARELDQAALPKRSRTWLNRHFVFTHGYGFTLSPVNTRAPDGLPDYFISDLGTSTRLEGSSELGITREDVKEAVPIGRAALYFGMLPSPYALAPSKLKELDYPVGDKNIYNHYLGSGGVPVGQPWQQLAAAMYLFEPRLLNTGSLTINSKLLIRREVRQRVRAIAPFLEVIGDPYLVSTSVSSKDLNYEAKQNQYWIVEAYTSSRTYPYAANLPDGRPLRYLRNSVKAIVDAYSGRVHLYVSEPRDPIILGWQRLFPDLFKPLEEMPSSLREHLKVPTDLFNVQVQQLLRYHVTDPRIFYSGDDVWQVPKELYGRRQVPVDPYHITAQLGTQESSEFLLLQPLTPLARPNLSAWLAARSDGEHYGKLVLLRFPSQTPIFGPEQIQALINQDPQISQQFGLWDRAGSEVVQGNLLVVPLGKALLYVEPVYLRARQGGLPTLTRVVVSDGKRIAMAEDLGEGLRALVDGSSNKAVYLNRNDLPPIKAADQLN</sequence>
<protein>
    <recommendedName>
        <fullName evidence="1">UPF0182 protein PMT_0755</fullName>
    </recommendedName>
</protein>
<evidence type="ECO:0000255" key="1">
    <source>
        <dbReference type="HAMAP-Rule" id="MF_01600"/>
    </source>
</evidence>
<reference key="1">
    <citation type="journal article" date="2003" name="Nature">
        <title>Genome divergence in two Prochlorococcus ecotypes reflects oceanic niche differentiation.</title>
        <authorList>
            <person name="Rocap G."/>
            <person name="Larimer F.W."/>
            <person name="Lamerdin J.E."/>
            <person name="Malfatti S."/>
            <person name="Chain P."/>
            <person name="Ahlgren N.A."/>
            <person name="Arellano A."/>
            <person name="Coleman M."/>
            <person name="Hauser L."/>
            <person name="Hess W.R."/>
            <person name="Johnson Z.I."/>
            <person name="Land M.L."/>
            <person name="Lindell D."/>
            <person name="Post A.F."/>
            <person name="Regala W."/>
            <person name="Shah M."/>
            <person name="Shaw S.L."/>
            <person name="Steglich C."/>
            <person name="Sullivan M.B."/>
            <person name="Ting C.S."/>
            <person name="Tolonen A."/>
            <person name="Webb E.A."/>
            <person name="Zinser E.R."/>
            <person name="Chisholm S.W."/>
        </authorList>
    </citation>
    <scope>NUCLEOTIDE SEQUENCE [LARGE SCALE GENOMIC DNA]</scope>
    <source>
        <strain>MIT 9313</strain>
    </source>
</reference>
<comment type="subcellular location">
    <subcellularLocation>
        <location evidence="1">Cell membrane</location>
        <topology evidence="1">Multi-pass membrane protein</topology>
    </subcellularLocation>
</comment>
<comment type="similarity">
    <text evidence="1">Belongs to the UPF0182 family.</text>
</comment>